<proteinExistence type="inferred from homology"/>
<evidence type="ECO:0000250" key="1"/>
<evidence type="ECO:0000255" key="2"/>
<evidence type="ECO:0000305" key="3"/>
<comment type="catalytic activity">
    <reaction>
        <text>Hydrolysis of terminal, non-reducing alpha-D-galactose residues in alpha-D-galactosides, including galactose oligosaccharides, galactomannans and galactolipids.</text>
        <dbReference type="EC" id="3.2.1.22"/>
    </reaction>
</comment>
<comment type="subunit">
    <text evidence="1">Homotetramer.</text>
</comment>
<comment type="subcellular location">
    <subcellularLocation>
        <location evidence="1">Secreted</location>
    </subcellularLocation>
</comment>
<comment type="similarity">
    <text evidence="3">Belongs to the glycosyl hydrolase 27 family.</text>
</comment>
<protein>
    <recommendedName>
        <fullName>Alpha-galactosidase</fullName>
        <ecNumber>3.2.1.22</ecNumber>
    </recommendedName>
    <alternativeName>
        <fullName>Alpha-D-galactoside galactohydrolase</fullName>
    </alternativeName>
    <alternativeName>
        <fullName>MELp</fullName>
    </alternativeName>
    <alternativeName>
        <fullName>Melibiase</fullName>
    </alternativeName>
</protein>
<gene>
    <name type="primary">MEL</name>
</gene>
<reference key="1">
    <citation type="journal article" date="1996" name="Mol. Gen. Genet.">
        <title>Superfamily of alpha-galactosidase MEL genes of the Saccharomyces sensu stricto species complex.</title>
        <authorList>
            <person name="Naumova E.S."/>
            <person name="Turakainen H."/>
            <person name="Naumov G.I."/>
            <person name="Korhola M."/>
        </authorList>
    </citation>
    <scope>NUCLEOTIDE SEQUENCE [GENOMIC DNA]</scope>
    <source>
        <strain>61-248</strain>
    </source>
</reference>
<dbReference type="EC" id="3.2.1.22"/>
<dbReference type="EMBL" id="X95505">
    <property type="protein sequence ID" value="CAA64759.1"/>
    <property type="molecule type" value="Genomic_DNA"/>
</dbReference>
<dbReference type="SMR" id="Q09187"/>
<dbReference type="CAZy" id="GH27">
    <property type="family name" value="Glycoside Hydrolase Family 27"/>
</dbReference>
<dbReference type="GlyCosmos" id="Q09187">
    <property type="glycosylation" value="9 sites, No reported glycans"/>
</dbReference>
<dbReference type="GO" id="GO:0005576">
    <property type="term" value="C:extracellular region"/>
    <property type="evidence" value="ECO:0007669"/>
    <property type="project" value="UniProtKB-SubCell"/>
</dbReference>
<dbReference type="GO" id="GO:0004557">
    <property type="term" value="F:alpha-galactosidase activity"/>
    <property type="evidence" value="ECO:0007669"/>
    <property type="project" value="UniProtKB-EC"/>
</dbReference>
<dbReference type="GO" id="GO:0005995">
    <property type="term" value="P:melibiose catabolic process"/>
    <property type="evidence" value="ECO:0007669"/>
    <property type="project" value="UniProtKB-ARBA"/>
</dbReference>
<dbReference type="CDD" id="cd14792">
    <property type="entry name" value="GH27"/>
    <property type="match status" value="1"/>
</dbReference>
<dbReference type="FunFam" id="3.20.20.70:FF:000202">
    <property type="entry name" value="Alpha-galactosidase"/>
    <property type="match status" value="1"/>
</dbReference>
<dbReference type="Gene3D" id="3.20.20.70">
    <property type="entry name" value="Aldolase class I"/>
    <property type="match status" value="1"/>
</dbReference>
<dbReference type="Gene3D" id="2.60.40.1180">
    <property type="entry name" value="Golgi alpha-mannosidase II"/>
    <property type="match status" value="1"/>
</dbReference>
<dbReference type="InterPro" id="IPR013785">
    <property type="entry name" value="Aldolase_TIM"/>
</dbReference>
<dbReference type="InterPro" id="IPR002241">
    <property type="entry name" value="Glyco_hydro_27"/>
</dbReference>
<dbReference type="InterPro" id="IPR000111">
    <property type="entry name" value="Glyco_hydro_27/36_CS"/>
</dbReference>
<dbReference type="InterPro" id="IPR013780">
    <property type="entry name" value="Glyco_hydro_b"/>
</dbReference>
<dbReference type="InterPro" id="IPR006215">
    <property type="entry name" value="Glyco_hydro_melibiase"/>
</dbReference>
<dbReference type="InterPro" id="IPR017853">
    <property type="entry name" value="Glycoside_hydrolase_SF"/>
</dbReference>
<dbReference type="InterPro" id="IPR041233">
    <property type="entry name" value="Melibiase_C"/>
</dbReference>
<dbReference type="PANTHER" id="PTHR11452:SF75">
    <property type="entry name" value="ALPHA-GALACTOSIDASE MEL1"/>
    <property type="match status" value="1"/>
</dbReference>
<dbReference type="PANTHER" id="PTHR11452">
    <property type="entry name" value="ALPHA-GALACTOSIDASE/ALPHA-N-ACETYLGALACTOSAMINIDASE"/>
    <property type="match status" value="1"/>
</dbReference>
<dbReference type="Pfam" id="PF16499">
    <property type="entry name" value="Melibiase_2"/>
    <property type="match status" value="1"/>
</dbReference>
<dbReference type="Pfam" id="PF17801">
    <property type="entry name" value="Melibiase_C"/>
    <property type="match status" value="1"/>
</dbReference>
<dbReference type="PRINTS" id="PR00740">
    <property type="entry name" value="GLHYDRLASE27"/>
</dbReference>
<dbReference type="PRINTS" id="PR00748">
    <property type="entry name" value="MELIBIASE"/>
</dbReference>
<dbReference type="SUPFAM" id="SSF51445">
    <property type="entry name" value="(Trans)glycosidases"/>
    <property type="match status" value="1"/>
</dbReference>
<dbReference type="SUPFAM" id="SSF51011">
    <property type="entry name" value="Glycosyl hydrolase domain"/>
    <property type="match status" value="1"/>
</dbReference>
<dbReference type="PROSITE" id="PS00512">
    <property type="entry name" value="ALPHA_GALACTOSIDASE"/>
    <property type="match status" value="1"/>
</dbReference>
<keyword id="KW-1015">Disulfide bond</keyword>
<keyword id="KW-0325">Glycoprotein</keyword>
<keyword id="KW-0326">Glycosidase</keyword>
<keyword id="KW-0378">Hydrolase</keyword>
<keyword id="KW-0964">Secreted</keyword>
<keyword id="KW-0732">Signal</keyword>
<name>MEL_SACPA</name>
<sequence>MFNLNFFNYTCHCEWCFWVLPSYNGLGLTPQMGWDNWNTFACNVSEDLLLNTADRISDIGLKDLGYKYVILDDCWSSGRDEDGFLVADEQKFPNGMGHVADRLHNNSFLFGMYSSAGEYTCAGYPGSLGREEEDAQFFANNRVDYLKYDNCYNKGRFGTPESSHKRYKAMSDALNKTGRPIFYSLCNWGQDLTFYWGSDIANSWRMSGDITAEFSRPDSRCPCDGDEYDCKYAGYHCSIMNILNKAAPMGQNGGIGGWNDLDNLEVGVGNLTDDEEKTHFSMWAMVKSPLIIGADVNHLKASSYSIYSQSSVIAINQDPKGIPATRVWRYYVPQTDKYGQGEIQFWSGPLENGDQVIALLNGGMKARPMNATLEDIFFDSYQGSEELSTSWDIYDLWANRIDNATASAILENNKVTNNTLYNATKLSYKEGLLNGDSRLFGTKVGTISPDGIINTTVPAHGIALYRLRSSS</sequence>
<organism>
    <name type="scientific">Saccharomyces paradoxus</name>
    <name type="common">Yeast</name>
    <name type="synonym">Saccharomyces douglasii</name>
    <dbReference type="NCBI Taxonomy" id="27291"/>
    <lineage>
        <taxon>Eukaryota</taxon>
        <taxon>Fungi</taxon>
        <taxon>Dikarya</taxon>
        <taxon>Ascomycota</taxon>
        <taxon>Saccharomycotina</taxon>
        <taxon>Saccharomycetes</taxon>
        <taxon>Saccharomycetales</taxon>
        <taxon>Saccharomycetaceae</taxon>
        <taxon>Saccharomyces</taxon>
    </lineage>
</organism>
<feature type="signal peptide" evidence="1">
    <location>
        <begin position="1"/>
        <end position="18"/>
    </location>
</feature>
<feature type="chain" id="PRO_0000001008" description="Alpha-galactosidase">
    <location>
        <begin position="19"/>
        <end position="471"/>
    </location>
</feature>
<feature type="active site" description="Nucleophile" evidence="1">
    <location>
        <position position="149"/>
    </location>
</feature>
<feature type="active site" description="Proton donor" evidence="1">
    <location>
        <position position="209"/>
    </location>
</feature>
<feature type="binding site" evidence="1">
    <location>
        <position position="72"/>
    </location>
    <ligand>
        <name>substrate</name>
    </ligand>
</feature>
<feature type="binding site" evidence="1">
    <location>
        <position position="73"/>
    </location>
    <ligand>
        <name>substrate</name>
    </ligand>
</feature>
<feature type="binding site" evidence="1">
    <location>
        <position position="147"/>
    </location>
    <ligand>
        <name>substrate</name>
    </ligand>
</feature>
<feature type="binding site" evidence="1">
    <location>
        <position position="205"/>
    </location>
    <ligand>
        <name>substrate</name>
    </ligand>
</feature>
<feature type="binding site" evidence="1">
    <location>
        <position position="251"/>
    </location>
    <ligand>
        <name>substrate</name>
    </ligand>
</feature>
<feature type="glycosylation site" description="N-linked (GlcNAc...) asparagine" evidence="2">
    <location>
        <position position="43"/>
    </location>
</feature>
<feature type="glycosylation site" description="N-linked (GlcNAc...) asparagine" evidence="2">
    <location>
        <position position="105"/>
    </location>
</feature>
<feature type="glycosylation site" description="N-linked (GlcNAc...) asparagine" evidence="2">
    <location>
        <position position="175"/>
    </location>
</feature>
<feature type="glycosylation site" description="N-linked (GlcNAc...) asparagine" evidence="2">
    <location>
        <position position="270"/>
    </location>
</feature>
<feature type="glycosylation site" description="N-linked (GlcNAc...) asparagine" evidence="2">
    <location>
        <position position="370"/>
    </location>
</feature>
<feature type="glycosylation site" description="N-linked (GlcNAc...) asparagine" evidence="2">
    <location>
        <position position="403"/>
    </location>
</feature>
<feature type="glycosylation site" description="N-linked (GlcNAc...) asparagine" evidence="2">
    <location>
        <position position="417"/>
    </location>
</feature>
<feature type="glycosylation site" description="N-linked (GlcNAc...) asparagine" evidence="2">
    <location>
        <position position="422"/>
    </location>
</feature>
<feature type="glycosylation site" description="N-linked (GlcNAc...) asparagine" evidence="2">
    <location>
        <position position="454"/>
    </location>
</feature>
<feature type="disulfide bond" evidence="1">
    <location>
        <begin position="42"/>
        <end position="74"/>
    </location>
</feature>
<feature type="disulfide bond" evidence="1">
    <location>
        <begin position="121"/>
        <end position="151"/>
    </location>
</feature>
<feature type="disulfide bond" evidence="1">
    <location>
        <begin position="221"/>
        <end position="237"/>
    </location>
</feature>
<feature type="disulfide bond" evidence="1">
    <location>
        <begin position="223"/>
        <end position="230"/>
    </location>
</feature>
<accession>Q09187</accession>